<name>PUR6_VIGAC</name>
<comment type="catalytic activity">
    <reaction>
        <text>5-amino-1-(5-phospho-D-ribosyl)imidazole-4-carboxylate + H(+) = 5-amino-1-(5-phospho-beta-D-ribosyl)imidazole + CO2</text>
        <dbReference type="Rhea" id="RHEA:10792"/>
        <dbReference type="ChEBI" id="CHEBI:15378"/>
        <dbReference type="ChEBI" id="CHEBI:16526"/>
        <dbReference type="ChEBI" id="CHEBI:77657"/>
        <dbReference type="ChEBI" id="CHEBI:137981"/>
        <dbReference type="EC" id="4.1.1.21"/>
    </reaction>
</comment>
<comment type="pathway">
    <text>Purine metabolism; IMP biosynthesis via de novo pathway; 5-amino-1-(5-phospho-D-ribosyl)imidazole-4-carboxylate from 5-amino-1-(5-phospho-D-ribosyl)imidazole (carboxylase route): step 1/1.</text>
</comment>
<comment type="subcellular location">
    <subcellularLocation>
        <location evidence="3">Plastid</location>
        <location evidence="3">Chloroplast</location>
    </subcellularLocation>
</comment>
<comment type="similarity">
    <text evidence="3">In the C-terminal section; belongs to the AIR carboxylase family. Class I subfamily.</text>
</comment>
<dbReference type="EC" id="4.1.1.21"/>
<dbReference type="EMBL" id="L22584">
    <property type="protein sequence ID" value="AAC37400.1"/>
    <property type="molecule type" value="mRNA"/>
</dbReference>
<dbReference type="PIR" id="S43322">
    <property type="entry name" value="S43322"/>
</dbReference>
<dbReference type="SMR" id="P55195"/>
<dbReference type="UniPathway" id="UPA00074">
    <property type="reaction ID" value="UER00130"/>
</dbReference>
<dbReference type="GO" id="GO:0009507">
    <property type="term" value="C:chloroplast"/>
    <property type="evidence" value="ECO:0007669"/>
    <property type="project" value="UniProtKB-SubCell"/>
</dbReference>
<dbReference type="GO" id="GO:0005524">
    <property type="term" value="F:ATP binding"/>
    <property type="evidence" value="ECO:0007669"/>
    <property type="project" value="UniProtKB-KW"/>
</dbReference>
<dbReference type="GO" id="GO:0046872">
    <property type="term" value="F:metal ion binding"/>
    <property type="evidence" value="ECO:0007669"/>
    <property type="project" value="InterPro"/>
</dbReference>
<dbReference type="GO" id="GO:0004638">
    <property type="term" value="F:phosphoribosylaminoimidazole carboxylase activity"/>
    <property type="evidence" value="ECO:0007669"/>
    <property type="project" value="UniProtKB-EC"/>
</dbReference>
<dbReference type="GO" id="GO:0006189">
    <property type="term" value="P:'de novo' IMP biosynthetic process"/>
    <property type="evidence" value="ECO:0007669"/>
    <property type="project" value="UniProtKB-UniPathway"/>
</dbReference>
<dbReference type="FunFam" id="3.40.50.1970:FF:000013">
    <property type="entry name" value="Phosphoribosylaminoimidazole carboxylase"/>
    <property type="match status" value="1"/>
</dbReference>
<dbReference type="FunFam" id="3.40.50.20:FF:000024">
    <property type="entry name" value="Phosphoribosylaminoimidazole carboxylase family protein / AIR carboxylase family protein"/>
    <property type="match status" value="1"/>
</dbReference>
<dbReference type="FunFam" id="3.30.470.20:FF:000037">
    <property type="entry name" value="Phosphoribosylaminoimidazole carboxylase, chloroplastic"/>
    <property type="match status" value="1"/>
</dbReference>
<dbReference type="Gene3D" id="3.40.50.1970">
    <property type="match status" value="1"/>
</dbReference>
<dbReference type="Gene3D" id="3.40.50.20">
    <property type="match status" value="1"/>
</dbReference>
<dbReference type="Gene3D" id="3.30.1490.20">
    <property type="entry name" value="ATP-grasp fold, A domain"/>
    <property type="match status" value="1"/>
</dbReference>
<dbReference type="Gene3D" id="3.30.470.20">
    <property type="entry name" value="ATP-grasp fold, B domain"/>
    <property type="match status" value="1"/>
</dbReference>
<dbReference type="HAMAP" id="MF_01929">
    <property type="entry name" value="PurE_classI"/>
    <property type="match status" value="1"/>
</dbReference>
<dbReference type="HAMAP" id="MF_01928">
    <property type="entry name" value="PurK"/>
    <property type="match status" value="1"/>
</dbReference>
<dbReference type="InterPro" id="IPR016301">
    <property type="entry name" value="Ade2_fungi/plant"/>
</dbReference>
<dbReference type="InterPro" id="IPR011761">
    <property type="entry name" value="ATP-grasp"/>
</dbReference>
<dbReference type="InterPro" id="IPR003135">
    <property type="entry name" value="ATP-grasp_carboxylate-amine"/>
</dbReference>
<dbReference type="InterPro" id="IPR013815">
    <property type="entry name" value="ATP_grasp_subdomain_1"/>
</dbReference>
<dbReference type="InterPro" id="IPR016185">
    <property type="entry name" value="PreATP-grasp_dom_sf"/>
</dbReference>
<dbReference type="InterPro" id="IPR033747">
    <property type="entry name" value="PurE_ClassI"/>
</dbReference>
<dbReference type="InterPro" id="IPR000031">
    <property type="entry name" value="PurE_dom"/>
</dbReference>
<dbReference type="InterPro" id="IPR005875">
    <property type="entry name" value="PurK"/>
</dbReference>
<dbReference type="InterPro" id="IPR040686">
    <property type="entry name" value="PurK_C"/>
</dbReference>
<dbReference type="InterPro" id="IPR054350">
    <property type="entry name" value="PurT/PurK_preATP-grasp"/>
</dbReference>
<dbReference type="InterPro" id="IPR011054">
    <property type="entry name" value="Rudment_hybrid_motif"/>
</dbReference>
<dbReference type="NCBIfam" id="NF004679">
    <property type="entry name" value="PRK06019.1-5"/>
    <property type="match status" value="1"/>
</dbReference>
<dbReference type="NCBIfam" id="TIGR01162">
    <property type="entry name" value="purE"/>
    <property type="match status" value="1"/>
</dbReference>
<dbReference type="NCBIfam" id="TIGR01161">
    <property type="entry name" value="purK"/>
    <property type="match status" value="1"/>
</dbReference>
<dbReference type="PANTHER" id="PTHR11609:SF5">
    <property type="entry name" value="PHOSPHORIBOSYLAMINOIMIDAZOLE CARBOXYLASE"/>
    <property type="match status" value="1"/>
</dbReference>
<dbReference type="PANTHER" id="PTHR11609">
    <property type="entry name" value="PURINE BIOSYNTHESIS PROTEIN 6/7, PUR6/7"/>
    <property type="match status" value="1"/>
</dbReference>
<dbReference type="Pfam" id="PF00731">
    <property type="entry name" value="AIRC"/>
    <property type="match status" value="1"/>
</dbReference>
<dbReference type="Pfam" id="PF02222">
    <property type="entry name" value="ATP-grasp"/>
    <property type="match status" value="1"/>
</dbReference>
<dbReference type="Pfam" id="PF17769">
    <property type="entry name" value="PurK_C"/>
    <property type="match status" value="1"/>
</dbReference>
<dbReference type="Pfam" id="PF22660">
    <property type="entry name" value="RS_preATP-grasp-like"/>
    <property type="match status" value="1"/>
</dbReference>
<dbReference type="PIRSF" id="PIRSF001340">
    <property type="entry name" value="AIR_carboxylase"/>
    <property type="match status" value="1"/>
</dbReference>
<dbReference type="SMART" id="SM01001">
    <property type="entry name" value="AIRC"/>
    <property type="match status" value="1"/>
</dbReference>
<dbReference type="SUPFAM" id="SSF56059">
    <property type="entry name" value="Glutathione synthetase ATP-binding domain-like"/>
    <property type="match status" value="1"/>
</dbReference>
<dbReference type="SUPFAM" id="SSF52255">
    <property type="entry name" value="N5-CAIR mutase (phosphoribosylaminoimidazole carboxylase, PurE)"/>
    <property type="match status" value="1"/>
</dbReference>
<dbReference type="SUPFAM" id="SSF52440">
    <property type="entry name" value="PreATP-grasp domain"/>
    <property type="match status" value="1"/>
</dbReference>
<dbReference type="SUPFAM" id="SSF51246">
    <property type="entry name" value="Rudiment single hybrid motif"/>
    <property type="match status" value="1"/>
</dbReference>
<dbReference type="PROSITE" id="PS50975">
    <property type="entry name" value="ATP_GRASP"/>
    <property type="match status" value="1"/>
</dbReference>
<accession>P55195</accession>
<evidence type="ECO:0000255" key="1"/>
<evidence type="ECO:0000255" key="2">
    <source>
        <dbReference type="PROSITE-ProRule" id="PRU00409"/>
    </source>
</evidence>
<evidence type="ECO:0000305" key="3"/>
<reference key="1">
    <citation type="journal article" date="1994" name="Plant Mol. Biol.">
        <title>Structural organization of de novo purine biosynthesis enzymes in plants: 5-aminoimidazole ribonucleotide carboxylase and 5-aminoimidazole-4-N-succinocarboxamide ribonucleotide synthetase cDNAs from Vigna aconitifolia.</title>
        <authorList>
            <person name="Chapman K.A."/>
            <person name="Delauney A.J."/>
            <person name="Kim J.H."/>
            <person name="Verma D.P.S."/>
        </authorList>
    </citation>
    <scope>NUCLEOTIDE SEQUENCE [MRNA]</scope>
    <source>
        <tissue>Root nodule</tissue>
    </source>
</reference>
<keyword id="KW-0067">ATP-binding</keyword>
<keyword id="KW-0150">Chloroplast</keyword>
<keyword id="KW-0210">Decarboxylase</keyword>
<keyword id="KW-0456">Lyase</keyword>
<keyword id="KW-0547">Nucleotide-binding</keyword>
<keyword id="KW-0934">Plastid</keyword>
<keyword id="KW-0658">Purine biosynthesis</keyword>
<keyword id="KW-0809">Transit peptide</keyword>
<protein>
    <recommendedName>
        <fullName>Phosphoribosylaminoimidazole carboxylase, chloroplastic</fullName>
        <ecNumber>4.1.1.21</ecNumber>
    </recommendedName>
    <alternativeName>
        <fullName>AIR carboxylase</fullName>
        <shortName>AIRC</shortName>
    </alternativeName>
</protein>
<proteinExistence type="evidence at transcript level"/>
<feature type="transit peptide" description="Chloroplast" evidence="1">
    <location>
        <begin position="1" status="less than"/>
        <end status="unknown"/>
    </location>
</feature>
<feature type="chain" id="PRO_0000029879" description="Phosphoribosylaminoimidazole carboxylase, chloroplastic">
    <location>
        <begin status="unknown"/>
        <end position="557"/>
    </location>
</feature>
<feature type="domain" description="ATP-grasp" evidence="2">
    <location>
        <begin position="108"/>
        <end position="293"/>
    </location>
</feature>
<feature type="region of interest" description="AIR carboxylase ATPase subunit">
    <location>
        <begin status="unknown"/>
        <end position="386"/>
    </location>
</feature>
<feature type="region of interest" description="AIR carboxylase catalytic subunit">
    <location>
        <begin position="387"/>
        <end position="557"/>
    </location>
</feature>
<feature type="binding site" evidence="2">
    <location>
        <begin position="132"/>
        <end position="189"/>
    </location>
    <ligand>
        <name>ATP</name>
        <dbReference type="ChEBI" id="CHEBI:30616"/>
    </ligand>
</feature>
<feature type="non-terminal residue">
    <location>
        <position position="1"/>
    </location>
</feature>
<organism>
    <name type="scientific">Vigna aconitifolia</name>
    <name type="common">Moth bean</name>
    <name type="synonym">Phaseolus aconitifolius</name>
    <dbReference type="NCBI Taxonomy" id="3918"/>
    <lineage>
        <taxon>Eukaryota</taxon>
        <taxon>Viridiplantae</taxon>
        <taxon>Streptophyta</taxon>
        <taxon>Embryophyta</taxon>
        <taxon>Tracheophyta</taxon>
        <taxon>Spermatophyta</taxon>
        <taxon>Magnoliopsida</taxon>
        <taxon>eudicotyledons</taxon>
        <taxon>Gunneridae</taxon>
        <taxon>Pentapetalae</taxon>
        <taxon>rosids</taxon>
        <taxon>fabids</taxon>
        <taxon>Fabales</taxon>
        <taxon>Fabaceae</taxon>
        <taxon>Papilionoideae</taxon>
        <taxon>50 kb inversion clade</taxon>
        <taxon>NPAAA clade</taxon>
        <taxon>indigoferoid/millettioid clade</taxon>
        <taxon>Phaseoleae</taxon>
        <taxon>Vigna</taxon>
    </lineage>
</organism>
<gene>
    <name type="primary">PURKE</name>
</gene>
<sequence>GLYEVVVGVLGGGQLGRMMCQAASQMAIKVMVLDPQENCPASSLSYHHMVGSFDESTKVEEFAKRCGVLTVEIEHVDVDTLEKLEKQGVDCQPKASTVRIIQDKYQQKVALLPAWIPLPEFMKIDDLKAKKWDSLDIHFMIKSRRLAYDGRGNFVAKSEEELSSAVDALGGFDRGLYAEKWAPFVKELAVIVARGRDNSISCYPVVELFTGHICHIVKSPANVNWKTRELAIEVAFNAVKSLEVPGVFAVELFLTKEGEILLNEVAPRPHNSGHHTIESCHTSQFEQHLPAVVGLPLGDPSMKTPAAIMYNILGEEEGEHGFQLAHQLMKRAMTIPGASVHWYDKPEMRKQRKMCHITIVGSSLSSIESNLAILLEGKGLHDKTAVCSTLLGFIMGSDSDLPVMKSAAEMMEMFGVPHEVRIVSAHRTPELMFCYASSAHERGYQVIIAGAGGAAHLPGMVASLTPLPVVGVPVRASTLDGLDSLLSIVQMPRGVPVATVAVNNATNAGLLAVRMLGVANDNLLSRMSQYQEDQKEAVLREGDKLEKHGWESYLKNS</sequence>